<organism>
    <name type="scientific">Lymantria dispar multicapsid nuclear polyhedrosis virus</name>
    <name type="common">LdMNPV</name>
    <dbReference type="NCBI Taxonomy" id="10449"/>
    <lineage>
        <taxon>Viruses</taxon>
        <taxon>Viruses incertae sedis</taxon>
        <taxon>Naldaviricetes</taxon>
        <taxon>Lefavirales</taxon>
        <taxon>Baculoviridae</taxon>
        <taxon>Alphabaculovirus</taxon>
        <taxon>Alphabaculovirus lydisparis</taxon>
    </lineage>
</organism>
<feature type="chain" id="PRO_0000132838" description="Late expression factor 11">
    <location>
        <begin position="1"/>
        <end position="187"/>
    </location>
</feature>
<feature type="region of interest" description="Disordered" evidence="2">
    <location>
        <begin position="1"/>
        <end position="24"/>
    </location>
</feature>
<feature type="region of interest" description="Disordered" evidence="2">
    <location>
        <begin position="119"/>
        <end position="187"/>
    </location>
</feature>
<keyword id="KW-1185">Reference proteome</keyword>
<keyword id="KW-0804">Transcription</keyword>
<keyword id="KW-0805">Transcription regulation</keyword>
<organismHost>
    <name type="scientific">Lepidoptera</name>
    <name type="common">butterflies and moths</name>
    <dbReference type="NCBI Taxonomy" id="7088"/>
</organismHost>
<dbReference type="EMBL" id="AF081810">
    <property type="protein sequence ID" value="AAC70230.1"/>
    <property type="molecule type" value="Genomic_DNA"/>
</dbReference>
<dbReference type="PIR" id="T30392">
    <property type="entry name" value="T30392"/>
</dbReference>
<dbReference type="RefSeq" id="NP_047681.1">
    <property type="nucleotide sequence ID" value="NC_001973.1"/>
</dbReference>
<dbReference type="KEGG" id="vg:1488591"/>
<dbReference type="OrthoDB" id="15391at10239"/>
<dbReference type="Proteomes" id="UP000203997">
    <property type="component" value="Genome"/>
</dbReference>
<dbReference type="GO" id="GO:0006355">
    <property type="term" value="P:regulation of DNA-templated transcription"/>
    <property type="evidence" value="ECO:0007669"/>
    <property type="project" value="InterPro"/>
</dbReference>
<dbReference type="GO" id="GO:0019058">
    <property type="term" value="P:viral life cycle"/>
    <property type="evidence" value="ECO:0007669"/>
    <property type="project" value="InterPro"/>
</dbReference>
<dbReference type="InterPro" id="IPR009429">
    <property type="entry name" value="Baculo_LEF-11"/>
</dbReference>
<dbReference type="Pfam" id="PF06385">
    <property type="entry name" value="Baculo_LEF-11"/>
    <property type="match status" value="1"/>
</dbReference>
<accession>Q9YMS9</accession>
<proteinExistence type="inferred from homology"/>
<sequence>MAPAVVGASQLRGGDSPGPARNRDHCLNRSEVYALTREAINKRKHLGDVKGVCAHLFDDSFSAQSDYIRENLATAFIVVGDNCRERKHLGQHAARFDRVFSLKRRTLYDEYHASAGRYGDTKPCRKRRFSRAAQVRDQPAQQERLGDQSVQDSPLRKEKDLVPHQGVGGVRPGQENGQARQEEQSQQ</sequence>
<name>LEF11_NPVLD</name>
<evidence type="ECO:0000250" key="1"/>
<evidence type="ECO:0000256" key="2">
    <source>
        <dbReference type="SAM" id="MobiDB-lite"/>
    </source>
</evidence>
<evidence type="ECO:0000305" key="3"/>
<protein>
    <recommendedName>
        <fullName>Late expression factor 11</fullName>
    </recommendedName>
</protein>
<reference key="1">
    <citation type="journal article" date="1999" name="Virology">
        <title>Sequence and analysis of the genome of a baculovirus pathogenic for Lymantria dispar.</title>
        <authorList>
            <person name="Kuzio J."/>
            <person name="Pearson M.N."/>
            <person name="Harwood S.H."/>
            <person name="Funk C.J."/>
            <person name="Evans J.T."/>
            <person name="Slavicek J.M."/>
            <person name="Rohrmann G.F."/>
        </authorList>
    </citation>
    <scope>NUCLEOTIDE SEQUENCE [LARGE SCALE GENOMIC DNA]</scope>
    <source>
        <strain>Isolate Cl 5-6</strain>
    </source>
</reference>
<comment type="function">
    <text evidence="1">Involved in late/very late gene activation.</text>
</comment>
<comment type="similarity">
    <text evidence="3">Belongs to the baculoviridae LEF-11 family.</text>
</comment>
<gene>
    <name type="primary">LEF-11</name>
    <name type="ordered locus">LdOrf-45</name>
</gene>